<proteinExistence type="inferred from homology"/>
<sequence>MTMSDPIADMLTRVRNANMVRHEKLELPASNIKKEIAEILKREGFVKSVEYIEDDKQGVIRMFLKYGANNERVITGLKRISKPGLRVYAKADELPKVLNGLGIALVSTSEGVLTDKEARQRNIGGEVLAYIW</sequence>
<comment type="function">
    <text evidence="1">One of the primary rRNA binding proteins, it binds directly to 16S rRNA central domain where it helps coordinate assembly of the platform of the 30S subunit.</text>
</comment>
<comment type="subunit">
    <text evidence="1">Part of the 30S ribosomal subunit. Contacts proteins S5 and S12.</text>
</comment>
<comment type="similarity">
    <text evidence="1">Belongs to the universal ribosomal protein uS8 family.</text>
</comment>
<evidence type="ECO:0000255" key="1">
    <source>
        <dbReference type="HAMAP-Rule" id="MF_01302"/>
    </source>
</evidence>
<evidence type="ECO:0000305" key="2"/>
<protein>
    <recommendedName>
        <fullName evidence="1">Small ribosomal subunit protein uS8</fullName>
    </recommendedName>
    <alternativeName>
        <fullName evidence="2">30S ribosomal protein S8</fullName>
    </alternativeName>
</protein>
<accession>B9E9K5</accession>
<name>RS8_MACCJ</name>
<organism>
    <name type="scientific">Macrococcus caseolyticus (strain JCSC5402)</name>
    <name type="common">Macrococcoides caseolyticum</name>
    <dbReference type="NCBI Taxonomy" id="458233"/>
    <lineage>
        <taxon>Bacteria</taxon>
        <taxon>Bacillati</taxon>
        <taxon>Bacillota</taxon>
        <taxon>Bacilli</taxon>
        <taxon>Bacillales</taxon>
        <taxon>Staphylococcaceae</taxon>
        <taxon>Macrococcoides</taxon>
    </lineage>
</organism>
<dbReference type="EMBL" id="AP009484">
    <property type="protein sequence ID" value="BAH16916.1"/>
    <property type="molecule type" value="Genomic_DNA"/>
</dbReference>
<dbReference type="RefSeq" id="WP_012656119.1">
    <property type="nucleotide sequence ID" value="NC_011999.1"/>
</dbReference>
<dbReference type="SMR" id="B9E9K5"/>
<dbReference type="STRING" id="458233.MCCL_0209"/>
<dbReference type="GeneID" id="35294484"/>
<dbReference type="GeneID" id="61130631"/>
<dbReference type="KEGG" id="mcl:MCCL_0209"/>
<dbReference type="eggNOG" id="COG0096">
    <property type="taxonomic scope" value="Bacteria"/>
</dbReference>
<dbReference type="HOGENOM" id="CLU_098428_0_2_9"/>
<dbReference type="OrthoDB" id="9802617at2"/>
<dbReference type="Proteomes" id="UP000001383">
    <property type="component" value="Chromosome"/>
</dbReference>
<dbReference type="GO" id="GO:1990904">
    <property type="term" value="C:ribonucleoprotein complex"/>
    <property type="evidence" value="ECO:0007669"/>
    <property type="project" value="UniProtKB-KW"/>
</dbReference>
<dbReference type="GO" id="GO:0005840">
    <property type="term" value="C:ribosome"/>
    <property type="evidence" value="ECO:0007669"/>
    <property type="project" value="UniProtKB-KW"/>
</dbReference>
<dbReference type="GO" id="GO:0019843">
    <property type="term" value="F:rRNA binding"/>
    <property type="evidence" value="ECO:0007669"/>
    <property type="project" value="UniProtKB-UniRule"/>
</dbReference>
<dbReference type="GO" id="GO:0003735">
    <property type="term" value="F:structural constituent of ribosome"/>
    <property type="evidence" value="ECO:0007669"/>
    <property type="project" value="InterPro"/>
</dbReference>
<dbReference type="GO" id="GO:0006412">
    <property type="term" value="P:translation"/>
    <property type="evidence" value="ECO:0007669"/>
    <property type="project" value="UniProtKB-UniRule"/>
</dbReference>
<dbReference type="FunFam" id="3.30.1370.30:FF:000002">
    <property type="entry name" value="30S ribosomal protein S8"/>
    <property type="match status" value="1"/>
</dbReference>
<dbReference type="FunFam" id="3.30.1490.10:FF:000001">
    <property type="entry name" value="30S ribosomal protein S8"/>
    <property type="match status" value="1"/>
</dbReference>
<dbReference type="Gene3D" id="3.30.1370.30">
    <property type="match status" value="1"/>
</dbReference>
<dbReference type="Gene3D" id="3.30.1490.10">
    <property type="match status" value="1"/>
</dbReference>
<dbReference type="HAMAP" id="MF_01302_B">
    <property type="entry name" value="Ribosomal_uS8_B"/>
    <property type="match status" value="1"/>
</dbReference>
<dbReference type="InterPro" id="IPR000630">
    <property type="entry name" value="Ribosomal_uS8"/>
</dbReference>
<dbReference type="InterPro" id="IPR047863">
    <property type="entry name" value="Ribosomal_uS8_CS"/>
</dbReference>
<dbReference type="InterPro" id="IPR035987">
    <property type="entry name" value="Ribosomal_uS8_sf"/>
</dbReference>
<dbReference type="NCBIfam" id="NF001109">
    <property type="entry name" value="PRK00136.1"/>
    <property type="match status" value="1"/>
</dbReference>
<dbReference type="PANTHER" id="PTHR11758">
    <property type="entry name" value="40S RIBOSOMAL PROTEIN S15A"/>
    <property type="match status" value="1"/>
</dbReference>
<dbReference type="Pfam" id="PF00410">
    <property type="entry name" value="Ribosomal_S8"/>
    <property type="match status" value="1"/>
</dbReference>
<dbReference type="SUPFAM" id="SSF56047">
    <property type="entry name" value="Ribosomal protein S8"/>
    <property type="match status" value="1"/>
</dbReference>
<dbReference type="PROSITE" id="PS00053">
    <property type="entry name" value="RIBOSOMAL_S8"/>
    <property type="match status" value="1"/>
</dbReference>
<keyword id="KW-1185">Reference proteome</keyword>
<keyword id="KW-0687">Ribonucleoprotein</keyword>
<keyword id="KW-0689">Ribosomal protein</keyword>
<keyword id="KW-0694">RNA-binding</keyword>
<keyword id="KW-0699">rRNA-binding</keyword>
<reference key="1">
    <citation type="journal article" date="2009" name="J. Bacteriol.">
        <title>Complete genome sequence of Macrococcus caseolyticus strain JCSCS5402, reflecting the ancestral genome of the human-pathogenic staphylococci.</title>
        <authorList>
            <person name="Baba T."/>
            <person name="Kuwahara-Arai K."/>
            <person name="Uchiyama I."/>
            <person name="Takeuchi F."/>
            <person name="Ito T."/>
            <person name="Hiramatsu K."/>
        </authorList>
    </citation>
    <scope>NUCLEOTIDE SEQUENCE [LARGE SCALE GENOMIC DNA]</scope>
    <source>
        <strain>JCSC5402</strain>
    </source>
</reference>
<feature type="chain" id="PRO_1000165338" description="Small ribosomal subunit protein uS8">
    <location>
        <begin position="1"/>
        <end position="132"/>
    </location>
</feature>
<gene>
    <name evidence="1" type="primary">rpsH</name>
    <name type="ordered locus">MCCL_0209</name>
</gene>